<proteinExistence type="inferred from homology"/>
<protein>
    <recommendedName>
        <fullName evidence="1">5-oxoprolinase subunit A</fullName>
        <shortName evidence="1">5-OPase subunit A</shortName>
        <ecNumber evidence="1">3.5.2.9</ecNumber>
    </recommendedName>
    <alternativeName>
        <fullName evidence="1">5-oxoprolinase (ATP-hydrolyzing) subunit A</fullName>
    </alternativeName>
</protein>
<evidence type="ECO:0000255" key="1">
    <source>
        <dbReference type="HAMAP-Rule" id="MF_00691"/>
    </source>
</evidence>
<organism>
    <name type="scientific">Azorhizobium caulinodans (strain ATCC 43989 / DSM 5975 / JCM 20966 / LMG 6465 / NBRC 14845 / NCIMB 13405 / ORS 571)</name>
    <dbReference type="NCBI Taxonomy" id="438753"/>
    <lineage>
        <taxon>Bacteria</taxon>
        <taxon>Pseudomonadati</taxon>
        <taxon>Pseudomonadota</taxon>
        <taxon>Alphaproteobacteria</taxon>
        <taxon>Hyphomicrobiales</taxon>
        <taxon>Xanthobacteraceae</taxon>
        <taxon>Azorhizobium</taxon>
    </lineage>
</organism>
<sequence>MPSVDLNSDLAEGFGIWHLTEDEALMDIVSSANIACGLHAGDPEIMAKAFAYAKSRGVAVGAHPGFPDLWGFGRRRMPFTPGEIERLVAYQVGAAQALATYSGHRITYVKVHGALGNIAEQEPEVAVAVANAVKAVDPSLVVLAGPLGAQAPATRDAGLRLAAEIFADRGYTEQGHLIPRSQPGAMIHDPVAAADRIIAMVQSGAVITAQGTHLPTSIDSICVHGDGPKAVETARYVRERLEAAGIAIAPFAP</sequence>
<name>PXPA_AZOC5</name>
<gene>
    <name evidence="1" type="primary">pxpA</name>
    <name type="ordered locus">AZC_4074</name>
</gene>
<dbReference type="EC" id="3.5.2.9" evidence="1"/>
<dbReference type="EMBL" id="AP009384">
    <property type="protein sequence ID" value="BAF90072.1"/>
    <property type="molecule type" value="Genomic_DNA"/>
</dbReference>
<dbReference type="RefSeq" id="WP_012172594.1">
    <property type="nucleotide sequence ID" value="NC_009937.1"/>
</dbReference>
<dbReference type="SMR" id="A8HRP6"/>
<dbReference type="STRING" id="438753.AZC_4074"/>
<dbReference type="KEGG" id="azc:AZC_4074"/>
<dbReference type="eggNOG" id="COG1540">
    <property type="taxonomic scope" value="Bacteria"/>
</dbReference>
<dbReference type="HOGENOM" id="CLU_069535_0_0_5"/>
<dbReference type="Proteomes" id="UP000000270">
    <property type="component" value="Chromosome"/>
</dbReference>
<dbReference type="GO" id="GO:0017168">
    <property type="term" value="F:5-oxoprolinase (ATP-hydrolyzing) activity"/>
    <property type="evidence" value="ECO:0007669"/>
    <property type="project" value="UniProtKB-UniRule"/>
</dbReference>
<dbReference type="GO" id="GO:0005524">
    <property type="term" value="F:ATP binding"/>
    <property type="evidence" value="ECO:0007669"/>
    <property type="project" value="UniProtKB-UniRule"/>
</dbReference>
<dbReference type="GO" id="GO:0005975">
    <property type="term" value="P:carbohydrate metabolic process"/>
    <property type="evidence" value="ECO:0007669"/>
    <property type="project" value="InterPro"/>
</dbReference>
<dbReference type="CDD" id="cd10787">
    <property type="entry name" value="LamB_YcsF_like"/>
    <property type="match status" value="1"/>
</dbReference>
<dbReference type="Gene3D" id="3.20.20.370">
    <property type="entry name" value="Glycoside hydrolase/deacetylase"/>
    <property type="match status" value="1"/>
</dbReference>
<dbReference type="HAMAP" id="MF_00691">
    <property type="entry name" value="PxpA"/>
    <property type="match status" value="1"/>
</dbReference>
<dbReference type="InterPro" id="IPR011330">
    <property type="entry name" value="Glyco_hydro/deAcase_b/a-brl"/>
</dbReference>
<dbReference type="InterPro" id="IPR005501">
    <property type="entry name" value="LamB/YcsF/PxpA-like"/>
</dbReference>
<dbReference type="NCBIfam" id="NF003814">
    <property type="entry name" value="PRK05406.1-3"/>
    <property type="match status" value="1"/>
</dbReference>
<dbReference type="NCBIfam" id="NF003816">
    <property type="entry name" value="PRK05406.1-5"/>
    <property type="match status" value="1"/>
</dbReference>
<dbReference type="PANTHER" id="PTHR30292:SF0">
    <property type="entry name" value="5-OXOPROLINASE SUBUNIT A"/>
    <property type="match status" value="1"/>
</dbReference>
<dbReference type="PANTHER" id="PTHR30292">
    <property type="entry name" value="UNCHARACTERIZED PROTEIN YBGL-RELATED"/>
    <property type="match status" value="1"/>
</dbReference>
<dbReference type="Pfam" id="PF03746">
    <property type="entry name" value="LamB_YcsF"/>
    <property type="match status" value="1"/>
</dbReference>
<dbReference type="SUPFAM" id="SSF88713">
    <property type="entry name" value="Glycoside hydrolase/deacetylase"/>
    <property type="match status" value="1"/>
</dbReference>
<feature type="chain" id="PRO_1000083115" description="5-oxoprolinase subunit A">
    <location>
        <begin position="1"/>
        <end position="253"/>
    </location>
</feature>
<keyword id="KW-0067">ATP-binding</keyword>
<keyword id="KW-0378">Hydrolase</keyword>
<keyword id="KW-0547">Nucleotide-binding</keyword>
<keyword id="KW-1185">Reference proteome</keyword>
<comment type="function">
    <text evidence="1">Catalyzes the cleavage of 5-oxoproline to form L-glutamate coupled to the hydrolysis of ATP to ADP and inorganic phosphate.</text>
</comment>
<comment type="catalytic activity">
    <reaction evidence="1">
        <text>5-oxo-L-proline + ATP + 2 H2O = L-glutamate + ADP + phosphate + H(+)</text>
        <dbReference type="Rhea" id="RHEA:10348"/>
        <dbReference type="ChEBI" id="CHEBI:15377"/>
        <dbReference type="ChEBI" id="CHEBI:15378"/>
        <dbReference type="ChEBI" id="CHEBI:29985"/>
        <dbReference type="ChEBI" id="CHEBI:30616"/>
        <dbReference type="ChEBI" id="CHEBI:43474"/>
        <dbReference type="ChEBI" id="CHEBI:58402"/>
        <dbReference type="ChEBI" id="CHEBI:456216"/>
        <dbReference type="EC" id="3.5.2.9"/>
    </reaction>
</comment>
<comment type="subunit">
    <text evidence="1">Forms a complex composed of PxpA, PxpB and PxpC.</text>
</comment>
<comment type="similarity">
    <text evidence="1">Belongs to the LamB/PxpA family.</text>
</comment>
<accession>A8HRP6</accession>
<reference key="1">
    <citation type="submission" date="2007-04" db="EMBL/GenBank/DDBJ databases">
        <title>Complete genome sequence of the nitrogen-fixing bacterium Azorhizobium caulinodans ORS571.</title>
        <authorList>
            <person name="Lee K.B."/>
            <person name="Backer P.D."/>
            <person name="Aono T."/>
            <person name="Liu C.T."/>
            <person name="Suzuki S."/>
            <person name="Suzuki T."/>
            <person name="Kaneko T."/>
            <person name="Yamada M."/>
            <person name="Tabata S."/>
            <person name="Kupfer D.M."/>
            <person name="Najar F.Z."/>
            <person name="Wiley G.B."/>
            <person name="Roe B."/>
            <person name="Binnewies T."/>
            <person name="Ussery D."/>
            <person name="Vereecke D."/>
            <person name="Gevers D."/>
            <person name="Holsters M."/>
            <person name="Oyaizu H."/>
        </authorList>
    </citation>
    <scope>NUCLEOTIDE SEQUENCE [LARGE SCALE GENOMIC DNA]</scope>
    <source>
        <strain>ATCC 43989 / DSM 5975 / JCM 20966 / LMG 6465 / NBRC 14845 / NCIMB 13405 / ORS 571</strain>
    </source>
</reference>